<name>ARHG4_HUMAN</name>
<reference key="1">
    <citation type="journal article" date="2000" name="Biochem. Biophys. Res. Commun.">
        <title>Isolation of two novel human RhoGEFs, ARHGEF3 and ARHGEF4, in 3p13-21 and 2q22.</title>
        <authorList>
            <person name="Thiesen S."/>
            <person name="Kuebart S."/>
            <person name="Ropers H.-H."/>
            <person name="Nothwang H.G."/>
        </authorList>
    </citation>
    <scope>NUCLEOTIDE SEQUENCE [MRNA] (ISOFORM 1)</scope>
    <scope>TISSUE SPECIFICITY</scope>
</reference>
<reference key="2">
    <citation type="journal article" date="2000" name="Science">
        <title>Asef, a link between the tumor suppressor APC and G-protein signaling.</title>
        <authorList>
            <person name="Kawasaki Y."/>
            <person name="Senda T."/>
            <person name="Ishidate T."/>
            <person name="Koyama R."/>
            <person name="Morishita T."/>
            <person name="Iwayama Y."/>
            <person name="Higuchi O."/>
            <person name="Akiyama T."/>
        </authorList>
    </citation>
    <scope>NUCLEOTIDE SEQUENCE [MRNA] (ISOFORM 3)</scope>
    <scope>FUNCTION</scope>
    <scope>SUBCELLULAR LOCATION</scope>
    <scope>INTERACTION WITH APC; RHOA AND RAC1</scope>
    <scope>IDENTIFICATION IN A COMPLEX WITH APC AND CTNNB1</scope>
    <source>
        <tissue>Fetal brain</tissue>
    </source>
</reference>
<reference key="3">
    <citation type="journal article" date="1999" name="DNA Res.">
        <title>Prediction of the coding sequences of unidentified human genes. XIV. The complete sequences of 100 new cDNA clones from brain which code for large proteins in vitro.</title>
        <authorList>
            <person name="Kikuno R."/>
            <person name="Nagase T."/>
            <person name="Ishikawa K."/>
            <person name="Hirosawa M."/>
            <person name="Miyajima N."/>
            <person name="Tanaka A."/>
            <person name="Kotani H."/>
            <person name="Nomura N."/>
            <person name="Ohara O."/>
        </authorList>
    </citation>
    <scope>NUCLEOTIDE SEQUENCE [LARGE SCALE MRNA] (ISOFORM 4)</scope>
    <source>
        <tissue>Brain</tissue>
    </source>
</reference>
<reference key="4">
    <citation type="journal article" date="2002" name="DNA Res.">
        <title>Construction of expression-ready cDNA clones for KIAA genes: manual curation of 330 KIAA cDNA clones.</title>
        <authorList>
            <person name="Nakajima D."/>
            <person name="Okazaki N."/>
            <person name="Yamakawa H."/>
            <person name="Kikuno R."/>
            <person name="Ohara O."/>
            <person name="Nagase T."/>
        </authorList>
    </citation>
    <scope>SEQUENCE REVISION</scope>
</reference>
<reference key="5">
    <citation type="journal article" date="2003" name="Nat. Cell Biol.">
        <title>Mutated APC and Asef are involved in the migration of colorectal tumour cells.</title>
        <authorList>
            <person name="Kawasaki Y."/>
            <person name="Sato R."/>
            <person name="Akiyama T."/>
        </authorList>
    </citation>
    <scope>FUNCTION</scope>
</reference>
<reference key="6">
    <citation type="journal article" date="2007" name="Mol. Cell. Biol.">
        <title>Asef2 functions as a Cdc42 exchange factor and is stimulated by the release of an autoinhibitory module from a concealed C-terminal activation element.</title>
        <authorList>
            <person name="Hamann M.J."/>
            <person name="Lubking C.M."/>
            <person name="Luchini D.N."/>
            <person name="Billadeau D.D."/>
        </authorList>
    </citation>
    <scope>FUNCTION</scope>
    <scope>TISSUE SPECIFICITY</scope>
</reference>
<reference key="7">
    <citation type="journal article" date="2007" name="Oncogene">
        <title>Identification and characterization of Asef2, a guanine-nucleotide exchange factor specific for Rac1 and Cdc42.</title>
        <authorList>
            <person name="Kawasaki Y."/>
            <person name="Sagara M."/>
            <person name="Shibata Y."/>
            <person name="Shirouzu M."/>
            <person name="Yokoyama S."/>
            <person name="Akiyama T."/>
        </authorList>
    </citation>
    <scope>FUNCTION</scope>
</reference>
<reference key="8">
    <citation type="journal article" date="2009" name="EMBO Rep.">
        <title>The adenomatous polyposis coli-associated exchange factors Asef and Asef2 are required for adenoma formation in Apc(Min/+)mice.</title>
        <authorList>
            <person name="Kawasaki Y."/>
            <person name="Tsuji S."/>
            <person name="Muroya K."/>
            <person name="Furukawa S."/>
            <person name="Shibata Y."/>
            <person name="Okuno M."/>
            <person name="Ohwada S."/>
            <person name="Akiyama T."/>
        </authorList>
    </citation>
    <scope>FUNCTION</scope>
    <scope>TISSUE SPECIFICITY</scope>
</reference>
<reference key="9">
    <citation type="journal article" date="2007" name="J. Biol. Chem.">
        <title>Crystal structure of the rac activator, Asef, reveals its autoinhibitory mechanism.</title>
        <authorList>
            <person name="Murayama K."/>
            <person name="Shirouzu M."/>
            <person name="Kawasaki Y."/>
            <person name="Kato-Murayama M."/>
            <person name="Hanawa-Suetsugu K."/>
            <person name="Sakamoto A."/>
            <person name="Katsura Y."/>
            <person name="Suenaga A."/>
            <person name="Toyama M."/>
            <person name="Terada T."/>
            <person name="Taiji M."/>
            <person name="Akiyama T."/>
            <person name="Yokoyama S."/>
        </authorList>
    </citation>
    <scope>X-RAY CRYSTALLOGRAPHY (2.36 ANGSTROMS) OF 143-611</scope>
    <scope>SH3 DOMAIN</scope>
</reference>
<reference key="10">
    <citation type="journal article" date="2006" name="Science">
        <title>The consensus coding sequences of human breast and colorectal cancers.</title>
        <authorList>
            <person name="Sjoeblom T."/>
            <person name="Jones S."/>
            <person name="Wood L.D."/>
            <person name="Parsons D.W."/>
            <person name="Lin J."/>
            <person name="Barber T.D."/>
            <person name="Mandelker D."/>
            <person name="Leary R.J."/>
            <person name="Ptak J."/>
            <person name="Silliman N."/>
            <person name="Szabo S."/>
            <person name="Buckhaults P."/>
            <person name="Farrell C."/>
            <person name="Meeh P."/>
            <person name="Markowitz S.D."/>
            <person name="Willis J."/>
            <person name="Dawson D."/>
            <person name="Willson J.K.V."/>
            <person name="Gazdar A.F."/>
            <person name="Hartigan J."/>
            <person name="Wu L."/>
            <person name="Liu C."/>
            <person name="Parmigiani G."/>
            <person name="Park B.H."/>
            <person name="Bachman K.E."/>
            <person name="Papadopoulos N."/>
            <person name="Vogelstein B."/>
            <person name="Kinzler K.W."/>
            <person name="Velculescu V.E."/>
        </authorList>
    </citation>
    <scope>VARIANTS [LARGE SCALE ANALYSIS] ARG-100 AND ARG-441</scope>
</reference>
<dbReference type="EMBL" id="AF249745">
    <property type="protein sequence ID" value="AAF79955.1"/>
    <property type="status" value="ALT_SEQ"/>
    <property type="molecule type" value="mRNA"/>
</dbReference>
<dbReference type="EMBL" id="AB042199">
    <property type="protein sequence ID" value="BAB11941.1"/>
    <property type="molecule type" value="mRNA"/>
</dbReference>
<dbReference type="EMBL" id="AB029035">
    <property type="protein sequence ID" value="BAA83064.1"/>
    <property type="status" value="ALT_INIT"/>
    <property type="molecule type" value="mRNA"/>
</dbReference>
<dbReference type="CCDS" id="CCDS2165.1">
    <molecule id="Q9NR80-1"/>
</dbReference>
<dbReference type="RefSeq" id="NP_056135.2">
    <molecule id="Q9NR80-1"/>
    <property type="nucleotide sequence ID" value="NM_015320.3"/>
</dbReference>
<dbReference type="RefSeq" id="NP_127462.1">
    <property type="nucleotide sequence ID" value="NM_032995.2"/>
</dbReference>
<dbReference type="PDB" id="2DX1">
    <property type="method" value="X-ray"/>
    <property type="resolution" value="2.36 A"/>
    <property type="chains" value="A=143-611"/>
</dbReference>
<dbReference type="PDB" id="2PZ1">
    <property type="method" value="X-ray"/>
    <property type="resolution" value="2.25 A"/>
    <property type="chains" value="A=170-632"/>
</dbReference>
<dbReference type="PDB" id="3NMX">
    <property type="method" value="X-ray"/>
    <property type="resolution" value="2.30 A"/>
    <property type="chains" value="D/E/F=170-194"/>
</dbReference>
<dbReference type="PDB" id="3NMZ">
    <property type="method" value="X-ray"/>
    <property type="resolution" value="3.01 A"/>
    <property type="chains" value="C/D=170-276"/>
</dbReference>
<dbReference type="PDBsum" id="2DX1"/>
<dbReference type="PDBsum" id="2PZ1"/>
<dbReference type="PDBsum" id="3NMX"/>
<dbReference type="PDBsum" id="3NMZ"/>
<dbReference type="SMR" id="Q9NR80"/>
<dbReference type="BioGRID" id="119114">
    <property type="interactions" value="73"/>
</dbReference>
<dbReference type="DIP" id="DIP-40814N"/>
<dbReference type="FunCoup" id="Q9NR80">
    <property type="interactions" value="730"/>
</dbReference>
<dbReference type="IntAct" id="Q9NR80">
    <property type="interactions" value="37"/>
</dbReference>
<dbReference type="MINT" id="Q9NR80"/>
<dbReference type="STRING" id="9606.ENSP00000316845"/>
<dbReference type="ChEMBL" id="CHEMBL4296093"/>
<dbReference type="GlyGen" id="Q9NR80">
    <property type="glycosylation" value="2 sites, 1 O-linked glycan (2 sites)"/>
</dbReference>
<dbReference type="iPTMnet" id="Q9NR80"/>
<dbReference type="PhosphoSitePlus" id="Q9NR80"/>
<dbReference type="BioMuta" id="ARHGEF4"/>
<dbReference type="DMDM" id="229463003"/>
<dbReference type="jPOST" id="Q9NR80"/>
<dbReference type="MassIVE" id="Q9NR80"/>
<dbReference type="PaxDb" id="9606-ENSP00000316845"/>
<dbReference type="PeptideAtlas" id="Q9NR80"/>
<dbReference type="ProteomicsDB" id="82293">
    <molecule id="Q9NR80-1"/>
</dbReference>
<dbReference type="ProteomicsDB" id="82294">
    <molecule id="Q9NR80-3"/>
</dbReference>
<dbReference type="ProteomicsDB" id="82295">
    <molecule id="Q9NR80-4"/>
</dbReference>
<dbReference type="ABCD" id="Q9NR80">
    <property type="antibodies" value="2 sequenced antibodies"/>
</dbReference>
<dbReference type="Antibodypedia" id="18611">
    <property type="antibodies" value="191 antibodies from 30 providers"/>
</dbReference>
<dbReference type="DNASU" id="50649"/>
<dbReference type="Ensembl" id="ENST00000326016.10">
    <molecule id="Q9NR80-1"/>
    <property type="protein sequence ID" value="ENSP00000316845.5"/>
    <property type="gene ID" value="ENSG00000136002.21"/>
</dbReference>
<dbReference type="Ensembl" id="ENST00000355771.7">
    <molecule id="Q9NR80-3"/>
    <property type="protein sequence ID" value="ENSP00000348017.3"/>
    <property type="gene ID" value="ENSG00000136002.21"/>
</dbReference>
<dbReference type="GeneID" id="50649"/>
<dbReference type="KEGG" id="hsa:50649"/>
<dbReference type="UCSC" id="uc002tsa.2">
    <molecule id="Q9NR80-1"/>
    <property type="organism name" value="human"/>
</dbReference>
<dbReference type="AGR" id="HGNC:684"/>
<dbReference type="CTD" id="50649"/>
<dbReference type="DisGeNET" id="50649"/>
<dbReference type="GeneCards" id="ARHGEF4"/>
<dbReference type="HGNC" id="HGNC:684">
    <property type="gene designation" value="ARHGEF4"/>
</dbReference>
<dbReference type="HPA" id="ENSG00000136002">
    <property type="expression patterns" value="Tissue enhanced (brain)"/>
</dbReference>
<dbReference type="MalaCards" id="ARHGEF4"/>
<dbReference type="MIM" id="605216">
    <property type="type" value="gene"/>
</dbReference>
<dbReference type="neXtProt" id="NX_Q9NR80"/>
<dbReference type="OpenTargets" id="ENSG00000136002"/>
<dbReference type="PharmGKB" id="PA24974"/>
<dbReference type="VEuPathDB" id="HostDB:ENSG00000136002"/>
<dbReference type="eggNOG" id="KOG3519">
    <property type="taxonomic scope" value="Eukaryota"/>
</dbReference>
<dbReference type="GeneTree" id="ENSGT00940000164741"/>
<dbReference type="HOGENOM" id="CLU_008436_2_0_1"/>
<dbReference type="InParanoid" id="Q9NR80"/>
<dbReference type="OMA" id="PRHDCGH"/>
<dbReference type="OrthoDB" id="660555at2759"/>
<dbReference type="PAN-GO" id="Q9NR80">
    <property type="GO annotations" value="1 GO annotation based on evolutionary models"/>
</dbReference>
<dbReference type="PhylomeDB" id="Q9NR80"/>
<dbReference type="TreeFam" id="TF316832"/>
<dbReference type="PathwayCommons" id="Q9NR80"/>
<dbReference type="Reactome" id="R-HSA-193648">
    <property type="pathway name" value="NRAGE signals death through JNK"/>
</dbReference>
<dbReference type="Reactome" id="R-HSA-416482">
    <property type="pathway name" value="G alpha (12/13) signalling events"/>
</dbReference>
<dbReference type="Reactome" id="R-HSA-8980692">
    <property type="pathway name" value="RHOA GTPase cycle"/>
</dbReference>
<dbReference type="Reactome" id="R-HSA-9013148">
    <property type="pathway name" value="CDC42 GTPase cycle"/>
</dbReference>
<dbReference type="Reactome" id="R-HSA-9013149">
    <property type="pathway name" value="RAC1 GTPase cycle"/>
</dbReference>
<dbReference type="SignaLink" id="Q9NR80"/>
<dbReference type="SIGNOR" id="Q9NR80"/>
<dbReference type="BioGRID-ORCS" id="50649">
    <property type="hits" value="12 hits in 1143 CRISPR screens"/>
</dbReference>
<dbReference type="ChiTaRS" id="ARHGEF4">
    <property type="organism name" value="human"/>
</dbReference>
<dbReference type="EvolutionaryTrace" id="Q9NR80"/>
<dbReference type="GeneWiki" id="ARHGEF4"/>
<dbReference type="GenomeRNAi" id="50649"/>
<dbReference type="Pharos" id="Q9NR80">
    <property type="development level" value="Tbio"/>
</dbReference>
<dbReference type="PRO" id="PR:Q9NR80"/>
<dbReference type="Proteomes" id="UP000005640">
    <property type="component" value="Chromosome 2"/>
</dbReference>
<dbReference type="RNAct" id="Q9NR80">
    <property type="molecule type" value="protein"/>
</dbReference>
<dbReference type="Bgee" id="ENSG00000136002">
    <property type="expression patterns" value="Expressed in right frontal lobe and 165 other cell types or tissues"/>
</dbReference>
<dbReference type="ExpressionAtlas" id="Q9NR80">
    <property type="expression patterns" value="baseline and differential"/>
</dbReference>
<dbReference type="GO" id="GO:0005829">
    <property type="term" value="C:cytosol"/>
    <property type="evidence" value="ECO:0000304"/>
    <property type="project" value="Reactome"/>
</dbReference>
<dbReference type="GO" id="GO:0032587">
    <property type="term" value="C:ruffle membrane"/>
    <property type="evidence" value="ECO:0007669"/>
    <property type="project" value="UniProtKB-SubCell"/>
</dbReference>
<dbReference type="GO" id="GO:0005085">
    <property type="term" value="F:guanyl-nucleotide exchange factor activity"/>
    <property type="evidence" value="ECO:0000315"/>
    <property type="project" value="UniProtKB"/>
</dbReference>
<dbReference type="GO" id="GO:0019904">
    <property type="term" value="F:protein domain specific binding"/>
    <property type="evidence" value="ECO:0000353"/>
    <property type="project" value="UniProtKB"/>
</dbReference>
<dbReference type="GO" id="GO:0046847">
    <property type="term" value="P:filopodium assembly"/>
    <property type="evidence" value="ECO:0000315"/>
    <property type="project" value="UniProtKB"/>
</dbReference>
<dbReference type="GO" id="GO:0035556">
    <property type="term" value="P:intracellular signal transduction"/>
    <property type="evidence" value="ECO:0007669"/>
    <property type="project" value="InterPro"/>
</dbReference>
<dbReference type="GO" id="GO:0030032">
    <property type="term" value="P:lamellipodium assembly"/>
    <property type="evidence" value="ECO:0000315"/>
    <property type="project" value="UniProtKB"/>
</dbReference>
<dbReference type="GO" id="GO:0051056">
    <property type="term" value="P:regulation of small GTPase mediated signal transduction"/>
    <property type="evidence" value="ECO:0000304"/>
    <property type="project" value="Reactome"/>
</dbReference>
<dbReference type="CDD" id="cd01224">
    <property type="entry name" value="PH_Collybistin_ASEF"/>
    <property type="match status" value="1"/>
</dbReference>
<dbReference type="CDD" id="cd00160">
    <property type="entry name" value="RhoGEF"/>
    <property type="match status" value="1"/>
</dbReference>
<dbReference type="CDD" id="cd11973">
    <property type="entry name" value="SH3_ASEF"/>
    <property type="match status" value="1"/>
</dbReference>
<dbReference type="FunFam" id="1.20.900.10:FF:000002">
    <property type="entry name" value="Rho guanine nucleotide exchange factor 9"/>
    <property type="match status" value="1"/>
</dbReference>
<dbReference type="FunFam" id="2.30.29.30:FF:000015">
    <property type="entry name" value="Rho guanine nucleotide exchange factor 9"/>
    <property type="match status" value="1"/>
</dbReference>
<dbReference type="FunFam" id="2.30.30.40:FF:000077">
    <property type="entry name" value="spermatogenesis-associated protein 13 isoform X2"/>
    <property type="match status" value="1"/>
</dbReference>
<dbReference type="Gene3D" id="1.20.900.10">
    <property type="entry name" value="Dbl homology (DH) domain"/>
    <property type="match status" value="1"/>
</dbReference>
<dbReference type="Gene3D" id="2.30.29.30">
    <property type="entry name" value="Pleckstrin-homology domain (PH domain)/Phosphotyrosine-binding domain (PTB)"/>
    <property type="match status" value="1"/>
</dbReference>
<dbReference type="Gene3D" id="2.30.30.40">
    <property type="entry name" value="SH3 Domains"/>
    <property type="match status" value="1"/>
</dbReference>
<dbReference type="IDEAL" id="IID00606"/>
<dbReference type="InterPro" id="IPR035899">
    <property type="entry name" value="DBL_dom_sf"/>
</dbReference>
<dbReference type="InterPro" id="IPR000219">
    <property type="entry name" value="DH_dom"/>
</dbReference>
<dbReference type="InterPro" id="IPR001331">
    <property type="entry name" value="GDS_CDC24_CS"/>
</dbReference>
<dbReference type="InterPro" id="IPR011993">
    <property type="entry name" value="PH-like_dom_sf"/>
</dbReference>
<dbReference type="InterPro" id="IPR001849">
    <property type="entry name" value="PH_domain"/>
</dbReference>
<dbReference type="InterPro" id="IPR036028">
    <property type="entry name" value="SH3-like_dom_sf"/>
</dbReference>
<dbReference type="InterPro" id="IPR001452">
    <property type="entry name" value="SH3_domain"/>
</dbReference>
<dbReference type="InterPro" id="IPR055251">
    <property type="entry name" value="SOS1_NGEF_PH"/>
</dbReference>
<dbReference type="PANTHER" id="PTHR47544">
    <property type="entry name" value="RHO GUANINE NUCLEOTIDE EXCHANGE FACTOR 4"/>
    <property type="match status" value="1"/>
</dbReference>
<dbReference type="PANTHER" id="PTHR47544:SF2">
    <property type="entry name" value="RHO GUANINE NUCLEOTIDE EXCHANGE FACTOR 4"/>
    <property type="match status" value="1"/>
</dbReference>
<dbReference type="Pfam" id="PF00621">
    <property type="entry name" value="RhoGEF"/>
    <property type="match status" value="1"/>
</dbReference>
<dbReference type="Pfam" id="PF00018">
    <property type="entry name" value="SH3_1"/>
    <property type="match status" value="1"/>
</dbReference>
<dbReference type="Pfam" id="PF22697">
    <property type="entry name" value="SOS1_NGEF_PH"/>
    <property type="match status" value="1"/>
</dbReference>
<dbReference type="SMART" id="SM00233">
    <property type="entry name" value="PH"/>
    <property type="match status" value="1"/>
</dbReference>
<dbReference type="SMART" id="SM00325">
    <property type="entry name" value="RhoGEF"/>
    <property type="match status" value="1"/>
</dbReference>
<dbReference type="SMART" id="SM00326">
    <property type="entry name" value="SH3"/>
    <property type="match status" value="1"/>
</dbReference>
<dbReference type="SUPFAM" id="SSF48065">
    <property type="entry name" value="DBL homology domain (DH-domain)"/>
    <property type="match status" value="1"/>
</dbReference>
<dbReference type="SUPFAM" id="SSF50729">
    <property type="entry name" value="PH domain-like"/>
    <property type="match status" value="1"/>
</dbReference>
<dbReference type="SUPFAM" id="SSF50044">
    <property type="entry name" value="SH3-domain"/>
    <property type="match status" value="1"/>
</dbReference>
<dbReference type="PROSITE" id="PS00741">
    <property type="entry name" value="DH_1"/>
    <property type="match status" value="1"/>
</dbReference>
<dbReference type="PROSITE" id="PS50010">
    <property type="entry name" value="DH_2"/>
    <property type="match status" value="1"/>
</dbReference>
<dbReference type="PROSITE" id="PS50003">
    <property type="entry name" value="PH_DOMAIN"/>
    <property type="match status" value="1"/>
</dbReference>
<dbReference type="PROSITE" id="PS50002">
    <property type="entry name" value="SH3"/>
    <property type="match status" value="1"/>
</dbReference>
<organism>
    <name type="scientific">Homo sapiens</name>
    <name type="common">Human</name>
    <dbReference type="NCBI Taxonomy" id="9606"/>
    <lineage>
        <taxon>Eukaryota</taxon>
        <taxon>Metazoa</taxon>
        <taxon>Chordata</taxon>
        <taxon>Craniata</taxon>
        <taxon>Vertebrata</taxon>
        <taxon>Euteleostomi</taxon>
        <taxon>Mammalia</taxon>
        <taxon>Eutheria</taxon>
        <taxon>Euarchontoglires</taxon>
        <taxon>Primates</taxon>
        <taxon>Haplorrhini</taxon>
        <taxon>Catarrhini</taxon>
        <taxon>Hominidae</taxon>
        <taxon>Homo</taxon>
    </lineage>
</organism>
<accession>Q9NR80</accession>
<accession>Q9HDC6</accession>
<accession>Q9UPP0</accession>
<comment type="function">
    <text evidence="6 7 9 11 12">Acts as a guanine nucleotide exchange factor (GEF) for RHOA, RAC1 and CDC42 GTPases. Binding of APC may activate RAC1 GEF activity. The APC-ARHGEF4 complex seems to be involved in cell migration as well as in E-cadherin-mediated cell-cell adhesion. Required for MMP9 up-regulation via the JNK signaling pathway in colorectal tumor cells. Involved in tumor angiogenesis and may play a role in intestinal adenoma formation and tumor progression.</text>
</comment>
<comment type="subunit">
    <text evidence="6">Isoform 3 interacts with RHOA and RAC1, and (via ABR domain) with APC. Found in a complex consisting of ARHGEF4, APC and CTNNB1.</text>
</comment>
<comment type="interaction">
    <interactant intactId="EBI-3389984">
        <id>Q9NR80</id>
    </interactant>
    <interactant intactId="EBI-7116203">
        <id>O75031</id>
        <label>HSF2BP</label>
    </interactant>
    <organismsDiffer>false</organismsDiffer>
    <experiments>3</experiments>
</comment>
<comment type="interaction">
    <interactant intactId="EBI-13639160">
        <id>Q9NR80-3</id>
    </interactant>
    <interactant intactId="EBI-727707">
        <id>P25054</id>
        <label>APC</label>
    </interactant>
    <organismsDiffer>false</organismsDiffer>
    <experiments>5</experiments>
</comment>
<comment type="subcellular location">
    <molecule>Isoform 3</molecule>
    <subcellularLocation>
        <location>Cytoplasm</location>
    </subcellularLocation>
    <subcellularLocation>
        <location evidence="15">Cell projection</location>
        <location evidence="15">Ruffle membrane</location>
        <topology evidence="15">Peripheral membrane protein</topology>
        <orientation evidence="15">Cytoplasmic side</orientation>
    </subcellularLocation>
    <text evidence="15">Associated with membrane ruffles.</text>
</comment>
<comment type="alternative products">
    <event type="alternative splicing"/>
    <isoform>
        <id>Q9NR80-1</id>
        <name>1</name>
        <sequence type="displayed"/>
    </isoform>
    <isoform>
        <id>Q9NR80-3</id>
        <name>3</name>
        <sequence type="described" ref="VSP_011617 VSP_011618"/>
    </isoform>
    <isoform>
        <id>Q9NR80-4</id>
        <name>4</name>
        <sequence type="described" ref="VSP_037119"/>
    </isoform>
</comment>
<comment type="tissue specificity">
    <text evidence="5 9 12">Expressed at high levels in the brain, skeletal muscle and testis and at low levels in the kidney, lung, small intestine, ovary and prostate. Expression is aberrantly enhanced in most colorectal tumors.</text>
</comment>
<comment type="domain">
    <text evidence="10">In an autoinhibited form the SH3 domain binds intramolecularly to the DH domain, thus blocking the Rac-binding site.</text>
</comment>
<comment type="sequence caution" evidence="15">
    <conflict type="erroneous initiation">
        <sequence resource="EMBL-CDS" id="AAF79955"/>
    </conflict>
    <text>Truncated N-terminus.</text>
</comment>
<comment type="sequence caution" evidence="15">
    <conflict type="frameshift">
        <sequence resource="EMBL-CDS" id="AAF79955"/>
    </conflict>
</comment>
<comment type="sequence caution" evidence="15">
    <conflict type="erroneous initiation">
        <sequence resource="EMBL-CDS" id="BAA83064"/>
    </conflict>
    <text>Extended N-terminus.</text>
</comment>
<proteinExistence type="evidence at protein level"/>
<gene>
    <name type="primary">ARHGEF4</name>
    <name type="synonym">KIAA1112</name>
</gene>
<keyword id="KW-0002">3D-structure</keyword>
<keyword id="KW-0025">Alternative splicing</keyword>
<keyword id="KW-1003">Cell membrane</keyword>
<keyword id="KW-0966">Cell projection</keyword>
<keyword id="KW-0963">Cytoplasm</keyword>
<keyword id="KW-0344">Guanine-nucleotide releasing factor</keyword>
<keyword id="KW-0472">Membrane</keyword>
<keyword id="KW-1267">Proteomics identification</keyword>
<keyword id="KW-1185">Reference proteome</keyword>
<keyword id="KW-0728">SH3 domain</keyword>
<sequence length="690" mass="79067">MPWEEPAGEKPSCSHSQKAFHMEPAQKPCFTTDMVTWALLCISAETVRGEAPSQPRGIPHRSPVSVDDLWLEKTQRKKLQKQAHVERRLHIGAVHKDGVKCWRKTIITSPESLNLPRRSHPLSQSAPTGLNHMGWPEHTPGTAMPDGALDTAVCADEVGSEEDLYDDLHSSSHHYSHPGGGGEQLAINELISDGSVVCAEALWDHVTMDDQELGFKAGDVIEVMDATNREWWWGRVADGEGWFPASFVRLRVNQDEPADDDAPLAGNSGAEDGGAEAQSSKDQMRTNVINEILSTERDYIKHLRDICEGYVRQCRKRADMFSEEQLRTIFGNIEDIYRCQKAFVKALEQRFNRERPHLSELGACFLEHQADFQIYSEYCNNHPNACVELSRLTKLSKYVYFFEACRLLQKMIDISLDGFLLTPVQKICKYPLQLAELLKYTHPQHRDFKDVEAALHAMKNVAQLINERKRRLENIDKIAQWQSSIEDWEGEDLLVRSSELIYSGELTRVTQPQAKSQQRMFFLFDHQLIYCKKDLLRRDVLYYKGRLDMDGLEVVDLEDGKDRDLHVSIKNAFRLHRGATGDSHLLCTRKPEQKQRWLKAFAREREQVQLDQETGFSITELQRKQAMLNASKQQVTGKPKAVGRPCYLTRQKHPALPSNRPQQQVLVLAEPRRKPSTFWHSISRLAPFRK</sequence>
<evidence type="ECO:0000255" key="1">
    <source>
        <dbReference type="PROSITE-ProRule" id="PRU00062"/>
    </source>
</evidence>
<evidence type="ECO:0000255" key="2">
    <source>
        <dbReference type="PROSITE-ProRule" id="PRU00145"/>
    </source>
</evidence>
<evidence type="ECO:0000255" key="3">
    <source>
        <dbReference type="PROSITE-ProRule" id="PRU00192"/>
    </source>
</evidence>
<evidence type="ECO:0000256" key="4">
    <source>
        <dbReference type="SAM" id="MobiDB-lite"/>
    </source>
</evidence>
<evidence type="ECO:0000269" key="5">
    <source>
    </source>
</evidence>
<evidence type="ECO:0000269" key="6">
    <source>
    </source>
</evidence>
<evidence type="ECO:0000269" key="7">
    <source>
    </source>
</evidence>
<evidence type="ECO:0000269" key="8">
    <source>
    </source>
</evidence>
<evidence type="ECO:0000269" key="9">
    <source>
    </source>
</evidence>
<evidence type="ECO:0000269" key="10">
    <source>
    </source>
</evidence>
<evidence type="ECO:0000269" key="11">
    <source>
    </source>
</evidence>
<evidence type="ECO:0000269" key="12">
    <source>
    </source>
</evidence>
<evidence type="ECO:0000303" key="13">
    <source>
    </source>
</evidence>
<evidence type="ECO:0000303" key="14">
    <source>
    </source>
</evidence>
<evidence type="ECO:0000305" key="15"/>
<evidence type="ECO:0007829" key="16">
    <source>
        <dbReference type="PDB" id="2DX1"/>
    </source>
</evidence>
<evidence type="ECO:0007829" key="17">
    <source>
        <dbReference type="PDB" id="2PZ1"/>
    </source>
</evidence>
<protein>
    <recommendedName>
        <fullName>Rho guanine nucleotide exchange factor 4</fullName>
    </recommendedName>
    <alternativeName>
        <fullName>APC-stimulated guanine nucleotide exchange factor 1</fullName>
        <shortName>Asef</shortName>
        <shortName>Asef1</shortName>
    </alternativeName>
</protein>
<feature type="chain" id="PRO_0000080914" description="Rho guanine nucleotide exchange factor 4">
    <location>
        <begin position="1"/>
        <end position="690"/>
    </location>
</feature>
<feature type="domain" description="SH3" evidence="3">
    <location>
        <begin position="194"/>
        <end position="253"/>
    </location>
</feature>
<feature type="domain" description="DH" evidence="1">
    <location>
        <begin position="284"/>
        <end position="468"/>
    </location>
</feature>
<feature type="domain" description="PH" evidence="2">
    <location>
        <begin position="499"/>
        <end position="606"/>
    </location>
</feature>
<feature type="region of interest" description="ABR (APC-binding region) domain">
    <location>
        <begin position="73"/>
        <end position="126"/>
    </location>
</feature>
<feature type="region of interest" description="Disordered" evidence="4">
    <location>
        <begin position="113"/>
        <end position="145"/>
    </location>
</feature>
<feature type="region of interest" description="Disordered" evidence="4">
    <location>
        <begin position="257"/>
        <end position="282"/>
    </location>
</feature>
<feature type="splice variant" id="VSP_011617" description="In isoform 3." evidence="14">
    <location>
        <begin position="1"/>
        <end position="71"/>
    </location>
</feature>
<feature type="splice variant" id="VSP_011618" description="In isoform 3." evidence="14">
    <original>EKTQRKKLQKQAHVERRLHIGAVHKDGVKCWRKTIITSPESLNLPRRSHPLSQSAPTGLNHMGWPEHTPGT</original>
    <variation>MRPDGQQALDAVVRSFDCHSEAALRQRNDVIYCSLPRTAQGIVQREDQLEVLVSLREVWGRRRGRDGTCTG</variation>
    <location>
        <begin position="72"/>
        <end position="142"/>
    </location>
</feature>
<feature type="splice variant" id="VSP_037119" description="In isoform 4." evidence="13">
    <original>AVGRPCYLTRQKHPALPSNRPQQQVLVLAEPRRKPSTFWHSISRLAPFRK</original>
    <variation>GRRTAAPPPRLPGPYPADIIPFSEPQSQAS</variation>
    <location>
        <begin position="641"/>
        <end position="690"/>
    </location>
</feature>
<feature type="sequence variant" id="VAR_057187" description="In dbSNP:rs10188052.">
    <original>D</original>
    <variation>H</variation>
    <location>
        <position position="33"/>
    </location>
</feature>
<feature type="sequence variant" id="VAR_035970" description="In a breast cancer sample; somatic mutation." evidence="8">
    <original>K</original>
    <variation>R</variation>
    <location>
        <position position="100"/>
    </location>
</feature>
<feature type="sequence variant" id="VAR_035971" description="In a breast cancer sample; somatic mutation." evidence="8">
    <original>T</original>
    <variation>R</variation>
    <location>
        <position position="441"/>
    </location>
</feature>
<feature type="helix" evidence="17">
    <location>
        <begin position="187"/>
        <end position="191"/>
    </location>
</feature>
<feature type="turn" evidence="17">
    <location>
        <begin position="192"/>
        <end position="194"/>
    </location>
</feature>
<feature type="strand" evidence="17">
    <location>
        <begin position="197"/>
        <end position="203"/>
    </location>
</feature>
<feature type="strand" evidence="17">
    <location>
        <begin position="220"/>
        <end position="225"/>
    </location>
</feature>
<feature type="strand" evidence="17">
    <location>
        <begin position="228"/>
        <end position="236"/>
    </location>
</feature>
<feature type="strand" evidence="17">
    <location>
        <begin position="239"/>
        <end position="244"/>
    </location>
</feature>
<feature type="helix" evidence="17">
    <location>
        <begin position="245"/>
        <end position="247"/>
    </location>
</feature>
<feature type="strand" evidence="17">
    <location>
        <begin position="248"/>
        <end position="250"/>
    </location>
</feature>
<feature type="helix" evidence="17">
    <location>
        <begin position="281"/>
        <end position="309"/>
    </location>
</feature>
<feature type="helix" evidence="17">
    <location>
        <begin position="311"/>
        <end position="316"/>
    </location>
</feature>
<feature type="turn" evidence="17">
    <location>
        <begin position="318"/>
        <end position="320"/>
    </location>
</feature>
<feature type="helix" evidence="17">
    <location>
        <begin position="323"/>
        <end position="330"/>
    </location>
</feature>
<feature type="helix" evidence="17">
    <location>
        <begin position="333"/>
        <end position="350"/>
    </location>
</feature>
<feature type="strand" evidence="16">
    <location>
        <begin position="353"/>
        <end position="355"/>
    </location>
</feature>
<feature type="helix" evidence="17">
    <location>
        <begin position="356"/>
        <end position="358"/>
    </location>
</feature>
<feature type="helix" evidence="17">
    <location>
        <begin position="362"/>
        <end position="367"/>
    </location>
</feature>
<feature type="helix" evidence="17">
    <location>
        <begin position="369"/>
        <end position="372"/>
    </location>
</feature>
<feature type="helix" evidence="17">
    <location>
        <begin position="375"/>
        <end position="393"/>
    </location>
</feature>
<feature type="helix" evidence="17">
    <location>
        <begin position="396"/>
        <end position="409"/>
    </location>
</feature>
<feature type="helix" evidence="17">
    <location>
        <begin position="416"/>
        <end position="439"/>
    </location>
</feature>
<feature type="helix" evidence="17">
    <location>
        <begin position="448"/>
        <end position="484"/>
    </location>
</feature>
<feature type="strand" evidence="16">
    <location>
        <begin position="485"/>
        <end position="487"/>
    </location>
</feature>
<feature type="helix" evidence="17">
    <location>
        <begin position="493"/>
        <end position="496"/>
    </location>
</feature>
<feature type="strand" evidence="17">
    <location>
        <begin position="500"/>
        <end position="509"/>
    </location>
</feature>
<feature type="turn" evidence="17">
    <location>
        <begin position="511"/>
        <end position="513"/>
    </location>
</feature>
<feature type="strand" evidence="17">
    <location>
        <begin position="516"/>
        <end position="524"/>
    </location>
</feature>
<feature type="strand" evidence="17">
    <location>
        <begin position="527"/>
        <end position="533"/>
    </location>
</feature>
<feature type="strand" evidence="17">
    <location>
        <begin position="541"/>
        <end position="548"/>
    </location>
</feature>
<feature type="turn" evidence="17">
    <location>
        <begin position="549"/>
        <end position="551"/>
    </location>
</feature>
<feature type="strand" evidence="17">
    <location>
        <begin position="553"/>
        <end position="556"/>
    </location>
</feature>
<feature type="strand" evidence="17">
    <location>
        <begin position="559"/>
        <end position="561"/>
    </location>
</feature>
<feature type="strand" evidence="17">
    <location>
        <begin position="571"/>
        <end position="576"/>
    </location>
</feature>
<feature type="strand" evidence="17">
    <location>
        <begin position="578"/>
        <end position="580"/>
    </location>
</feature>
<feature type="strand" evidence="17">
    <location>
        <begin position="583"/>
        <end position="590"/>
    </location>
</feature>
<feature type="helix" evidence="17">
    <location>
        <begin position="591"/>
        <end position="609"/>
    </location>
</feature>